<gene>
    <name evidence="6" type="primary">notP</name>
</gene>
<proteinExistence type="evidence at protein level"/>
<evidence type="ECO:0000250" key="1">
    <source>
        <dbReference type="UniProtKB" id="Q988B9"/>
    </source>
</evidence>
<evidence type="ECO:0000255" key="2"/>
<evidence type="ECO:0000269" key="3">
    <source>
    </source>
</evidence>
<evidence type="ECO:0000269" key="4">
    <source>
    </source>
</evidence>
<evidence type="ECO:0000269" key="5">
    <source>
    </source>
</evidence>
<evidence type="ECO:0000303" key="6">
    <source>
    </source>
</evidence>
<evidence type="ECO:0000305" key="7"/>
<evidence type="ECO:0000305" key="8">
    <source>
    </source>
</evidence>
<dbReference type="EC" id="3.1.-.-" evidence="7"/>
<dbReference type="EMBL" id="HM622670">
    <property type="protein sequence ID" value="ADM34149.1"/>
    <property type="molecule type" value="Genomic_DNA"/>
</dbReference>
<dbReference type="SMR" id="E1ACR1"/>
<dbReference type="GO" id="GO:0016787">
    <property type="term" value="F:hydrolase activity"/>
    <property type="evidence" value="ECO:0007669"/>
    <property type="project" value="UniProtKB-KW"/>
</dbReference>
<dbReference type="GO" id="GO:0046872">
    <property type="term" value="F:metal ion binding"/>
    <property type="evidence" value="ECO:0007669"/>
    <property type="project" value="UniProtKB-KW"/>
</dbReference>
<dbReference type="GO" id="GO:0044550">
    <property type="term" value="P:secondary metabolite biosynthetic process"/>
    <property type="evidence" value="ECO:0007669"/>
    <property type="project" value="UniProtKB-ARBA"/>
</dbReference>
<dbReference type="CDD" id="cd07722">
    <property type="entry name" value="LACTB2-like_MBL-fold"/>
    <property type="match status" value="1"/>
</dbReference>
<dbReference type="FunFam" id="3.60.15.10:FF:000041">
    <property type="entry name" value="Metallo-beta-lactamase domain protein"/>
    <property type="match status" value="1"/>
</dbReference>
<dbReference type="Gene3D" id="3.60.15.10">
    <property type="entry name" value="Ribonuclease Z/Hydroxyacylglutathione hydrolase-like"/>
    <property type="match status" value="1"/>
</dbReference>
<dbReference type="Gene3D" id="1.10.10.10">
    <property type="entry name" value="Winged helix-like DNA-binding domain superfamily/Winged helix DNA-binding domain"/>
    <property type="match status" value="1"/>
</dbReference>
<dbReference type="InterPro" id="IPR047921">
    <property type="entry name" value="LACTB2-like_MBL-fold"/>
</dbReference>
<dbReference type="InterPro" id="IPR001279">
    <property type="entry name" value="Metallo-B-lactamas"/>
</dbReference>
<dbReference type="InterPro" id="IPR036866">
    <property type="entry name" value="RibonucZ/Hydroxyglut_hydro"/>
</dbReference>
<dbReference type="InterPro" id="IPR050662">
    <property type="entry name" value="Sec-metab_biosynth-thioest"/>
</dbReference>
<dbReference type="InterPro" id="IPR036388">
    <property type="entry name" value="WH-like_DNA-bd_sf"/>
</dbReference>
<dbReference type="PANTHER" id="PTHR23131:SF3">
    <property type="entry name" value="ATROCHRYSONE CARBOXYL ACP THIOESTERASE"/>
    <property type="match status" value="1"/>
</dbReference>
<dbReference type="PANTHER" id="PTHR23131">
    <property type="entry name" value="ENDORIBONUCLEASE LACTB2"/>
    <property type="match status" value="1"/>
</dbReference>
<dbReference type="Pfam" id="PF00753">
    <property type="entry name" value="Lactamase_B"/>
    <property type="match status" value="1"/>
</dbReference>
<dbReference type="SMART" id="SM00849">
    <property type="entry name" value="Lactamase_B"/>
    <property type="match status" value="1"/>
</dbReference>
<dbReference type="SUPFAM" id="SSF56281">
    <property type="entry name" value="Metallo-hydrolase/oxidoreductase"/>
    <property type="match status" value="1"/>
</dbReference>
<feature type="chain" id="PRO_0000448825" description="Lactamase-like protein notP">
    <location>
        <begin position="1"/>
        <end position="321"/>
    </location>
</feature>
<feature type="active site" description="Proton donor/acceptor" evidence="2">
    <location>
        <position position="112"/>
    </location>
</feature>
<feature type="binding site" evidence="1">
    <location>
        <position position="108"/>
    </location>
    <ligand>
        <name>Zn(2+)</name>
        <dbReference type="ChEBI" id="CHEBI:29105"/>
        <label>1</label>
        <note>catalytic</note>
    </ligand>
</feature>
<feature type="binding site" evidence="1">
    <location>
        <position position="110"/>
    </location>
    <ligand>
        <name>Zn(2+)</name>
        <dbReference type="ChEBI" id="CHEBI:29105"/>
        <label>1</label>
        <note>catalytic</note>
    </ligand>
</feature>
<feature type="binding site" evidence="1">
    <location>
        <position position="112"/>
    </location>
    <ligand>
        <name>Zn(2+)</name>
        <dbReference type="ChEBI" id="CHEBI:29105"/>
        <label>2</label>
        <note>catalytic</note>
    </ligand>
</feature>
<feature type="binding site" evidence="1">
    <location>
        <position position="113"/>
    </location>
    <ligand>
        <name>Zn(2+)</name>
        <dbReference type="ChEBI" id="CHEBI:29105"/>
        <label>2</label>
        <note>catalytic</note>
    </ligand>
</feature>
<sequence length="321" mass="35451">MAPGEGGYRQINKALNICAFEDYLEGQQKALPSLPDVEQISPRVLRVLGQNPASHCKFTLQGTNTFVVGTGPERLIVDTGQGIPEWADLIHETLARRGITLSHVLLTHWHGDHTGGVPDLIRMYPHLSSAIYKHEPSKTQQPITDGQIFRVEGATVRAVHTPGHSSDHMCFVLEEEHGMFTGDNILGHGTSAVEHLSTWMHTLYKMQAQDCTTGYPAHGIVISNLRTKIKGELAQKLQRERQVLKALVQAKQAERARMERAKGSVTVKELVATMYGNGVGAGIRELALEPFMDEVLRKLAEDGAVAFEVRGRVKKWFAPDA</sequence>
<organism>
    <name type="scientific">Aspergillus sp. (strain MF297-2)</name>
    <dbReference type="NCBI Taxonomy" id="877550"/>
    <lineage>
        <taxon>Eukaryota</taxon>
        <taxon>Fungi</taxon>
        <taxon>Dikarya</taxon>
        <taxon>Ascomycota</taxon>
        <taxon>Pezizomycotina</taxon>
        <taxon>Eurotiomycetes</taxon>
        <taxon>Eurotiomycetidae</taxon>
        <taxon>Eurotiales</taxon>
        <taxon>Aspergillaceae</taxon>
        <taxon>Aspergillus</taxon>
    </lineage>
</organism>
<comment type="function">
    <text evidence="4 5 8">Lactamase-like protein; part of the gene cluster that mediates the biosynthesis of notoamide, a fungal indole alkaloid that belongs to a family of natural products containing a characteristic bicyclo[2.2.2]diazaoctane core (PubMed:20722388). The first step of notoamide biosynthesis involves coupling of L-proline and L-tryptophan by the bimodular NRPS notE, to produce cyclo-L-tryptophan-L-proline called brevianamide F (PubMed:20722388). The reverse prenyltransferase notF then acts as a deoxybrevianamide E synthase and converts brevianamide F to deoxybrevianamide E via reverse prenylation at C-2 of the indole ring leading to the bicyclo[2.2.2]diazaoctane core (PubMed:20722388). Deoxybrevianamide E is further hydroxylated at C-6 of the indole ring, likely catalyzed by the cytochrome P450 monooxygenase notG, to yield 6-hydroxy-deoxybrevianamide E (Probable). 6-hydroxy-deoxybrevianamide E is a specific substrate of the prenyltransferase notC for normal prenylation at C-7 to produce 6-hydroxy-7-prenyl-deoxybrevianamide, also called notoamide S (PubMed:20722388). As the proposed pivotal branching point in notoamide biosynthesis, notoamide S can be diverted to notoamide E through an oxidative pyran ring closure putatively catalyzed by either notH cytochrome P450 monooxygenase or the notD FAD-linked oxidoreductase (Probable). This step would be followed by an indole 2,3-epoxidation-initiated pinacol-like rearrangement catalyzed by the notB FAD-dependent monooxygenase leading to the formation of notoamide C and notoamide D (PubMed:22188465). On the other hand notoamide S is converted to notoamide T by notH (or notD), a bifunctional oxidase that also functions as the intramolecular Diels-Alderase responsible for generation of (+)-notoamide T (Probable). To generate antipodal (-)-notoaminide T, notH' (or notD') in Aspergillus versicolor is expected to catalyze a Diels-Alder reaction leading to the opposite stereochemistry (Probable). The remaining oxidoreductase notD (or notH) likely catalyzes the oxidative pyran ring formation to yield (+)-stephacidin A (Probable). The FAD-dependent monooxygenase notI is highly similar to notB and is predicted to catalyze a similar conversion from (+)-stephacidin A to (-)-notoamide B via the 2,3-epoxidation of (+)-stephacidin A followed by a pinacol-type rearrangement (Probable). Finally, it remains unclear which enzyme could be responsible for the final hydroxylation steps leading to notoamide A and sclerotiamide (Probable). The function of notP in the notoamide biosynthesis has not been determined yet (Probable).</text>
</comment>
<comment type="cofactor">
    <cofactor evidence="1">
        <name>Zn(2+)</name>
        <dbReference type="ChEBI" id="CHEBI:29105"/>
    </cofactor>
    <text evidence="1">Binds 2 Zn(2+) ions per subunit.</text>
</comment>
<comment type="biotechnology">
    <text evidence="3">Notoamides have been shown to exhibit antitumoral activities (PubMed:17304611). Notoamides A-C show moderate cytotoxicity against HeLa and L1210 cells with IC(50) values in the range of 22-52 mg/ml, but the IC(50) value of notoamide D is greater than 100 mg/ml (PubMed:17304611). Moreover, notoamide C induces G2/M-cell cycle arrest at a concentration of 6.3 mg/ml (PubMed:17304611).</text>
</comment>
<comment type="similarity">
    <text evidence="7">Belongs to the metallo-beta-lactamase superfamily.</text>
</comment>
<accession>E1ACR1</accession>
<name>NOTP_ASPSM</name>
<protein>
    <recommendedName>
        <fullName evidence="6">Lactamase-like protein notP</fullName>
        <ecNumber evidence="7">3.1.-.-</ecNumber>
    </recommendedName>
    <alternativeName>
        <fullName evidence="6">Notoamide biosynthesis cluster protein P</fullName>
    </alternativeName>
</protein>
<reference key="1">
    <citation type="journal article" date="2010" name="J. Am. Chem. Soc.">
        <title>Genome-based characterization of two prenylation steps in the assembly of the stephacidin and notoamide anticancer agents in a marine-derived Aspergillus sp.</title>
        <authorList>
            <person name="Ding Y."/>
            <person name="de Wet J.R."/>
            <person name="Cavalcoli J."/>
            <person name="Li S."/>
            <person name="Greshock T.J."/>
            <person name="Miller K.A."/>
            <person name="Finefield J.M."/>
            <person name="Sunderhaus J.D."/>
            <person name="McAfoos T.J."/>
            <person name="Tsukamoto S."/>
            <person name="Williams R.M."/>
            <person name="Sherman D.H."/>
        </authorList>
    </citation>
    <scope>NUCLEOTIDE SEQUENCE [GENOMIC DNA]</scope>
    <source>
        <strain>MF297-2</strain>
    </source>
</reference>
<reference key="2">
    <citation type="journal article" date="2007" name="Angew. Chem. Int. Ed.">
        <title>Notoamides A-D: prenylated indole alkaloids isolated from a marine-derived fungus, Aspergillus sp.</title>
        <authorList>
            <person name="Kato H."/>
            <person name="Yoshida T."/>
            <person name="Tokue T."/>
            <person name="Nojiri Y."/>
            <person name="Hirota H."/>
            <person name="Ohta T."/>
            <person name="Williams R.M."/>
            <person name="Tsukamoto S."/>
        </authorList>
    </citation>
    <scope>BIOTECHNOLOGY</scope>
</reference>
<reference key="3">
    <citation type="journal article" date="2012" name="J. Am. Chem. Soc.">
        <title>Biochemical characterization of NotB as an FAD-dependent oxidase in the biosynthesis of notoamide indole alkaloids.</title>
        <authorList>
            <person name="Li S."/>
            <person name="Finefield J.M."/>
            <person name="Sunderhaus J.D."/>
            <person name="McAfoos T.J."/>
            <person name="Williams R.M."/>
            <person name="Sherman D.H."/>
        </authorList>
    </citation>
    <scope>FUNCTION</scope>
</reference>
<reference key="4">
    <citation type="journal article" date="2012" name="Med. Chem. Commun.">
        <title>Comparative analysis of the biosynthetic systems for fungal bicyclo[2.2.2]diazaoctane indole alkaloids: the (+)/(-)-notoamide, paraherquamide and malbrancheamide pathways.</title>
        <authorList>
            <person name="Li S."/>
            <person name="Anand K."/>
            <person name="Tran H."/>
            <person name="Yu F."/>
            <person name="Finefield J.M."/>
            <person name="Sunderhaus J.D."/>
            <person name="McAfoos T.J."/>
            <person name="Tsukamoto S."/>
            <person name="Williams R.M."/>
            <person name="Sherman D.H."/>
        </authorList>
    </citation>
    <scope>FUNCTION</scope>
</reference>
<keyword id="KW-0378">Hydrolase</keyword>
<keyword id="KW-0479">Metal-binding</keyword>
<keyword id="KW-0862">Zinc</keyword>